<gene>
    <name type="primary">ths</name>
</gene>
<accession>Q53546</accession>
<protein>
    <recommendedName>
        <fullName>Thermosome subunit</fullName>
    </recommendedName>
    <alternativeName>
        <fullName>Hyperthermophilic heat shock protein</fullName>
        <shortName>HHSP</shortName>
    </alternativeName>
</protein>
<sequence>MAQLAGQPVVILPEGTQRYVGRDAQRLNILAARIVAETIRTTLGPKGMDKMLVDSLGDIVITNDGATILDEMDIQHPAAKMMVEVAKTQDKEAGDGTTTAVVIAGELLKKAEELLDQNIHPSIIIKGYALAAEKAQEILEGIAKEVSPDDVETLKKAAVTSITGKAAEEEREYLAEIAVEAVRQVAEKVGDKYKVDLDNIKFEKKEGASVHETQLIRGVVIDKEVVHPGMPKRVENAKIALINDALEVKETETDAEIRITSPEQLQAFLEQEERMLREMVDKIKEVGANVVFVQKGIDDLAQHYLAKYGIMAVRRVKKSDMEKLAKATGAKIVTNVRDLTPEDLGEAELVEQRKVAGENMIFVEGCKNPKAVTILIRGGTEHVVDEVERALEDAVKVVKDIVEDGKILPAGGAPEIELAIKLDEYAKEVGGKEQLAIEAFAEALKVIPRTLAENAGLDPVETLVKVIAAHKEKGPTIGVDVFEGEPADMMEKGVIAPLRVPKQAIKSASEAAIMILRIDDVIAASKLEKDKEDKGGSNDFGSDLD</sequence>
<reference key="1">
    <citation type="journal article" date="1995" name="Biochem. Biophys. Res. Commun.">
        <title>Gene of heat shock protein of sulfur-dependent archaeal hyperthermophile Desulfurococcus.</title>
        <authorList>
            <person name="Kagawa Y."/>
            <person name="Ohta T."/>
            <person name="Abe Y."/>
            <person name="Endo H."/>
            <person name="Yohda M."/>
            <person name="Kato N."/>
            <person name="Endo I."/>
            <person name="Hamamoto T."/>
            <person name="Ichida M."/>
            <person name="Hoaki T."/>
        </authorList>
    </citation>
    <scope>NUCLEOTIDE SEQUENCE [GENOMIC DNA]</scope>
</reference>
<comment type="function">
    <text evidence="1">Molecular chaperone; binds unfolded polypeptides in vitro, and has a weak ATPase activity.</text>
</comment>
<comment type="subunit">
    <text evidence="1">Forms an oligomeric complex of eight-membered rings.</text>
</comment>
<comment type="similarity">
    <text evidence="2">Belongs to the TCP-1 chaperonin family.</text>
</comment>
<evidence type="ECO:0000250" key="1"/>
<evidence type="ECO:0000305" key="2"/>
<name>THS_DESSY</name>
<dbReference type="EMBL" id="S79557">
    <property type="protein sequence ID" value="AAB35235.1"/>
    <property type="molecule type" value="Genomic_DNA"/>
</dbReference>
<dbReference type="SMR" id="Q53546"/>
<dbReference type="GO" id="GO:0005524">
    <property type="term" value="F:ATP binding"/>
    <property type="evidence" value="ECO:0007669"/>
    <property type="project" value="UniProtKB-KW"/>
</dbReference>
<dbReference type="GO" id="GO:0016887">
    <property type="term" value="F:ATP hydrolysis activity"/>
    <property type="evidence" value="ECO:0007669"/>
    <property type="project" value="InterPro"/>
</dbReference>
<dbReference type="GO" id="GO:0140662">
    <property type="term" value="F:ATP-dependent protein folding chaperone"/>
    <property type="evidence" value="ECO:0007669"/>
    <property type="project" value="InterPro"/>
</dbReference>
<dbReference type="GO" id="GO:0051082">
    <property type="term" value="F:unfolded protein binding"/>
    <property type="evidence" value="ECO:0007669"/>
    <property type="project" value="InterPro"/>
</dbReference>
<dbReference type="CDD" id="cd03343">
    <property type="entry name" value="cpn60"/>
    <property type="match status" value="1"/>
</dbReference>
<dbReference type="Gene3D" id="3.50.7.10">
    <property type="entry name" value="GroEL"/>
    <property type="match status" value="1"/>
</dbReference>
<dbReference type="Gene3D" id="1.10.560.10">
    <property type="entry name" value="GroEL-like equatorial domain"/>
    <property type="match status" value="1"/>
</dbReference>
<dbReference type="Gene3D" id="3.30.260.10">
    <property type="entry name" value="TCP-1-like chaperonin intermediate domain"/>
    <property type="match status" value="1"/>
</dbReference>
<dbReference type="InterPro" id="IPR017998">
    <property type="entry name" value="Chaperone_TCP-1"/>
</dbReference>
<dbReference type="InterPro" id="IPR002194">
    <property type="entry name" value="Chaperonin_TCP-1_CS"/>
</dbReference>
<dbReference type="InterPro" id="IPR002423">
    <property type="entry name" value="Cpn60/GroEL/TCP-1"/>
</dbReference>
<dbReference type="InterPro" id="IPR027409">
    <property type="entry name" value="GroEL-like_apical_dom_sf"/>
</dbReference>
<dbReference type="InterPro" id="IPR027413">
    <property type="entry name" value="GROEL-like_equatorial_sf"/>
</dbReference>
<dbReference type="InterPro" id="IPR027410">
    <property type="entry name" value="TCP-1-like_intermed_sf"/>
</dbReference>
<dbReference type="InterPro" id="IPR053374">
    <property type="entry name" value="TCP-1_chaperonin"/>
</dbReference>
<dbReference type="InterPro" id="IPR054827">
    <property type="entry name" value="thermosome_alpha"/>
</dbReference>
<dbReference type="InterPro" id="IPR012714">
    <property type="entry name" value="Thermosome_arc"/>
</dbReference>
<dbReference type="NCBIfam" id="NF041082">
    <property type="entry name" value="thermosome_alpha"/>
    <property type="match status" value="1"/>
</dbReference>
<dbReference type="NCBIfam" id="TIGR02339">
    <property type="entry name" value="thermosome_arch"/>
    <property type="match status" value="1"/>
</dbReference>
<dbReference type="NCBIfam" id="NF041083">
    <property type="entry name" value="thermosome_beta"/>
    <property type="match status" value="1"/>
</dbReference>
<dbReference type="PANTHER" id="PTHR11353">
    <property type="entry name" value="CHAPERONIN"/>
    <property type="match status" value="1"/>
</dbReference>
<dbReference type="Pfam" id="PF00118">
    <property type="entry name" value="Cpn60_TCP1"/>
    <property type="match status" value="1"/>
</dbReference>
<dbReference type="PRINTS" id="PR00304">
    <property type="entry name" value="TCOMPLEXTCP1"/>
</dbReference>
<dbReference type="SUPFAM" id="SSF52029">
    <property type="entry name" value="GroEL apical domain-like"/>
    <property type="match status" value="1"/>
</dbReference>
<dbReference type="SUPFAM" id="SSF48592">
    <property type="entry name" value="GroEL equatorial domain-like"/>
    <property type="match status" value="1"/>
</dbReference>
<dbReference type="SUPFAM" id="SSF54849">
    <property type="entry name" value="GroEL-intermediate domain like"/>
    <property type="match status" value="1"/>
</dbReference>
<dbReference type="PROSITE" id="PS00750">
    <property type="entry name" value="TCP1_1"/>
    <property type="match status" value="1"/>
</dbReference>
<dbReference type="PROSITE" id="PS00751">
    <property type="entry name" value="TCP1_2"/>
    <property type="match status" value="1"/>
</dbReference>
<dbReference type="PROSITE" id="PS00995">
    <property type="entry name" value="TCP1_3"/>
    <property type="match status" value="1"/>
</dbReference>
<feature type="chain" id="PRO_0000128384" description="Thermosome subunit">
    <location>
        <begin position="1"/>
        <end position="545"/>
    </location>
</feature>
<organism>
    <name type="scientific">Desulfurococcus sp. (strain SY)</name>
    <dbReference type="NCBI Taxonomy" id="59822"/>
    <lineage>
        <taxon>Archaea</taxon>
        <taxon>Thermoproteota</taxon>
        <taxon>Thermoprotei</taxon>
        <taxon>Desulfurococcales</taxon>
        <taxon>Desulfurococcaceae</taxon>
        <taxon>Desulfurococcus</taxon>
    </lineage>
</organism>
<proteinExistence type="inferred from homology"/>
<keyword id="KW-0067">ATP-binding</keyword>
<keyword id="KW-0143">Chaperone</keyword>
<keyword id="KW-0547">Nucleotide-binding</keyword>
<keyword id="KW-0346">Stress response</keyword>